<protein>
    <recommendedName>
        <fullName>Leucine-rich repeat and calponin homology domain-containing protein 1</fullName>
    </recommendedName>
    <alternativeName>
        <fullName>Neuronal protein</fullName>
    </alternativeName>
</protein>
<comment type="function">
    <text evidence="1">Acts as a negative regulator of GTPase CDC42 by sequestering CDC42-guanine exchange factor DOCK8. Probably by preventing CDC42 activation, negatively regulates CD4(+) T-cell migration.</text>
</comment>
<comment type="subunit">
    <text evidence="1">Interacts (via LRR repeats) with unphosphorylated DOCK8 (via DHR-2 domain); the interaction prevents the interaction between DOCK8 and CDC42.</text>
</comment>
<comment type="subcellular location">
    <subcellularLocation>
        <location evidence="1">Cytoplasm</location>
    </subcellularLocation>
</comment>
<comment type="sequence caution" evidence="4">
    <conflict type="frameshift">
        <sequence resource="EMBL-CDS" id="CAA56129"/>
    </conflict>
</comment>
<dbReference type="EMBL" id="X79682">
    <property type="protein sequence ID" value="CAA56129.1"/>
    <property type="status" value="ALT_FRAME"/>
    <property type="molecule type" value="mRNA"/>
</dbReference>
<dbReference type="PIR" id="S47145">
    <property type="entry name" value="S47145"/>
</dbReference>
<dbReference type="RefSeq" id="NP_001041620.1">
    <property type="nucleotide sequence ID" value="NM_001048155.1"/>
</dbReference>
<dbReference type="SMR" id="P41737"/>
<dbReference type="STRING" id="9685.ENSFCAP00000034191"/>
<dbReference type="PaxDb" id="9685-ENSFCAP00000020488"/>
<dbReference type="GeneID" id="727691"/>
<dbReference type="KEGG" id="fca:727691"/>
<dbReference type="CTD" id="23143"/>
<dbReference type="eggNOG" id="KOG0532">
    <property type="taxonomic scope" value="Eukaryota"/>
</dbReference>
<dbReference type="HOGENOM" id="CLU_074728_0_0_1"/>
<dbReference type="InParanoid" id="P41737"/>
<dbReference type="OrthoDB" id="6149831at2759"/>
<dbReference type="Proteomes" id="UP000011712">
    <property type="component" value="Unplaced"/>
</dbReference>
<dbReference type="GO" id="GO:0005737">
    <property type="term" value="C:cytoplasm"/>
    <property type="evidence" value="ECO:0007669"/>
    <property type="project" value="UniProtKB-SubCell"/>
</dbReference>
<dbReference type="CDD" id="cd21271">
    <property type="entry name" value="CH_LRCH2"/>
    <property type="match status" value="1"/>
</dbReference>
<dbReference type="FunFam" id="1.10.418.10:FF:000021">
    <property type="entry name" value="Leucine-rich repeat and calponin homology domain-containing protein 1 isoform 3"/>
    <property type="match status" value="1"/>
</dbReference>
<dbReference type="Gene3D" id="1.10.418.10">
    <property type="entry name" value="Calponin-like domain"/>
    <property type="match status" value="1"/>
</dbReference>
<dbReference type="InterPro" id="IPR050606">
    <property type="entry name" value="Calponin-like"/>
</dbReference>
<dbReference type="InterPro" id="IPR001715">
    <property type="entry name" value="CH_dom"/>
</dbReference>
<dbReference type="InterPro" id="IPR036872">
    <property type="entry name" value="CH_dom_sf"/>
</dbReference>
<dbReference type="PANTHER" id="PTHR47385">
    <property type="entry name" value="CALPONIN"/>
    <property type="match status" value="1"/>
</dbReference>
<dbReference type="PANTHER" id="PTHR47385:SF14">
    <property type="entry name" value="TRANSGELIN"/>
    <property type="match status" value="1"/>
</dbReference>
<dbReference type="Pfam" id="PF00307">
    <property type="entry name" value="CH"/>
    <property type="match status" value="1"/>
</dbReference>
<dbReference type="SMART" id="SM00033">
    <property type="entry name" value="CH"/>
    <property type="match status" value="1"/>
</dbReference>
<dbReference type="SUPFAM" id="SSF47576">
    <property type="entry name" value="Calponin-homology domain, CH-domain"/>
    <property type="match status" value="1"/>
</dbReference>
<dbReference type="PROSITE" id="PS50021">
    <property type="entry name" value="CH"/>
    <property type="match status" value="1"/>
</dbReference>
<accession>P41737</accession>
<feature type="chain" id="PRO_0000084477" description="Leucine-rich repeat and calponin homology domain-containing protein 1">
    <location>
        <begin position="1" status="less than"/>
        <end position="251"/>
    </location>
</feature>
<feature type="domain" description="Calponin-homology (CH)" evidence="2">
    <location>
        <begin position="131"/>
        <end position="244"/>
    </location>
</feature>
<feature type="region of interest" description="Disordered" evidence="3">
    <location>
        <begin position="73"/>
        <end position="97"/>
    </location>
</feature>
<feature type="compositionally biased region" description="Polar residues" evidence="3">
    <location>
        <begin position="88"/>
        <end position="97"/>
    </location>
</feature>
<feature type="modified residue" description="Phosphoserine" evidence="1">
    <location>
        <position position="87"/>
    </location>
</feature>
<feature type="modified residue" description="Phosphoserine" evidence="1">
    <location>
        <position position="91"/>
    </location>
</feature>
<feature type="modified residue" description="Phosphothreonine" evidence="1">
    <location>
        <position position="123"/>
    </location>
</feature>
<feature type="non-terminal residue">
    <location>
        <position position="1"/>
    </location>
</feature>
<organism>
    <name type="scientific">Felis catus</name>
    <name type="common">Cat</name>
    <name type="synonym">Felis silvestris catus</name>
    <dbReference type="NCBI Taxonomy" id="9685"/>
    <lineage>
        <taxon>Eukaryota</taxon>
        <taxon>Metazoa</taxon>
        <taxon>Chordata</taxon>
        <taxon>Craniata</taxon>
        <taxon>Vertebrata</taxon>
        <taxon>Euteleostomi</taxon>
        <taxon>Mammalia</taxon>
        <taxon>Eutheria</taxon>
        <taxon>Laurasiatheria</taxon>
        <taxon>Carnivora</taxon>
        <taxon>Feliformia</taxon>
        <taxon>Felidae</taxon>
        <taxon>Felinae</taxon>
        <taxon>Felis</taxon>
    </lineage>
</organism>
<reference key="1">
    <citation type="submission" date="1994-06" db="EMBL/GenBank/DDBJ databases">
        <authorList>
            <person name="Henschel R.R."/>
            <person name="Wahle P."/>
        </authorList>
    </citation>
    <scope>NUCLEOTIDE SEQUENCE [MRNA]</scope>
    <source>
        <tissue>Brain cortex</tissue>
    </source>
</reference>
<sequence length="251" mass="28078">DVDMAMIEQLREAVDLLQDPDRLSTDVSERNVVNFYPVESAEALDLQDSALNGQIQLETSPVCEVQNDLTLQSNGSEYSPNEIRANSPAISPTANSTGPFGLKPRSVFLRPQRNLESIDPQFTIRRKMEQMREEKELVEHLRESIEMRLKVSLHEDLGAALMDGVVLCHLVNHIRPRSVASIHVPSPAVPKLSMAKCRRNVENFLEACRKLGVPEEKLCLPHHILEEKGLVKVGITVQALLDVTVTKSLFT</sequence>
<proteinExistence type="evidence at transcript level"/>
<evidence type="ECO:0000250" key="1">
    <source>
        <dbReference type="UniProtKB" id="Q9Y2L9"/>
    </source>
</evidence>
<evidence type="ECO:0000255" key="2">
    <source>
        <dbReference type="PROSITE-ProRule" id="PRU00044"/>
    </source>
</evidence>
<evidence type="ECO:0000256" key="3">
    <source>
        <dbReference type="SAM" id="MobiDB-lite"/>
    </source>
</evidence>
<evidence type="ECO:0000305" key="4"/>
<keyword id="KW-0963">Cytoplasm</keyword>
<keyword id="KW-0597">Phosphoprotein</keyword>
<keyword id="KW-1185">Reference proteome</keyword>
<name>LRCH1_FELCA</name>